<accession>Q2W2I6</accession>
<name>RS12_PARM1</name>
<organism>
    <name type="scientific">Paramagnetospirillum magneticum (strain ATCC 700264 / AMB-1)</name>
    <name type="common">Magnetospirillum magneticum</name>
    <dbReference type="NCBI Taxonomy" id="342108"/>
    <lineage>
        <taxon>Bacteria</taxon>
        <taxon>Pseudomonadati</taxon>
        <taxon>Pseudomonadota</taxon>
        <taxon>Alphaproteobacteria</taxon>
        <taxon>Rhodospirillales</taxon>
        <taxon>Magnetospirillaceae</taxon>
        <taxon>Paramagnetospirillum</taxon>
    </lineage>
</organism>
<feature type="chain" id="PRO_0000238133" description="Small ribosomal subunit protein uS12">
    <location>
        <begin position="1"/>
        <end position="123"/>
    </location>
</feature>
<feature type="region of interest" description="Disordered" evidence="3">
    <location>
        <begin position="101"/>
        <end position="123"/>
    </location>
</feature>
<feature type="compositionally biased region" description="Basic residues" evidence="3">
    <location>
        <begin position="110"/>
        <end position="123"/>
    </location>
</feature>
<feature type="modified residue" description="3-methylthioaspartic acid" evidence="1">
    <location>
        <position position="89"/>
    </location>
</feature>
<comment type="function">
    <text evidence="2">With S4 and S5 plays an important role in translational accuracy.</text>
</comment>
<comment type="function">
    <text evidence="2">Interacts with and stabilizes bases of the 16S rRNA that are involved in tRNA selection in the A site and with the mRNA backbone. Located at the interface of the 30S and 50S subunits, it traverses the body of the 30S subunit contacting proteins on the other side and probably holding the rRNA structure together. The combined cluster of proteins S8, S12 and S17 appears to hold together the shoulder and platform of the 30S subunit.</text>
</comment>
<comment type="subunit">
    <text evidence="2">Part of the 30S ribosomal subunit. Contacts proteins S8 and S17. May interact with IF1 in the 30S initiation complex.</text>
</comment>
<comment type="similarity">
    <text evidence="2">Belongs to the universal ribosomal protein uS12 family.</text>
</comment>
<keyword id="KW-0488">Methylation</keyword>
<keyword id="KW-0687">Ribonucleoprotein</keyword>
<keyword id="KW-0689">Ribosomal protein</keyword>
<keyword id="KW-0694">RNA-binding</keyword>
<keyword id="KW-0699">rRNA-binding</keyword>
<keyword id="KW-0820">tRNA-binding</keyword>
<gene>
    <name evidence="2" type="primary">rpsL</name>
    <name type="ordered locus">amb3135</name>
</gene>
<sequence length="123" mass="13940">MPTINQLIRKPRQPVAARNKVPAMEACPQKRGVCTRVYTTTPKKPNSALRKVARVRLTNGFEVTSYIPGEGHNLQEHSVVMIRGGRVKDLPGVRYHIIRGTLDTQGVKDRRQRRSKYGAKRPK</sequence>
<proteinExistence type="inferred from homology"/>
<protein>
    <recommendedName>
        <fullName evidence="2">Small ribosomal subunit protein uS12</fullName>
    </recommendedName>
    <alternativeName>
        <fullName evidence="4">30S ribosomal protein S12</fullName>
    </alternativeName>
</protein>
<reference key="1">
    <citation type="journal article" date="2005" name="DNA Res.">
        <title>Complete genome sequence of the facultative anaerobic magnetotactic bacterium Magnetospirillum sp. strain AMB-1.</title>
        <authorList>
            <person name="Matsunaga T."/>
            <person name="Okamura Y."/>
            <person name="Fukuda Y."/>
            <person name="Wahyudi A.T."/>
            <person name="Murase Y."/>
            <person name="Takeyama H."/>
        </authorList>
    </citation>
    <scope>NUCLEOTIDE SEQUENCE [LARGE SCALE GENOMIC DNA]</scope>
    <source>
        <strain>ATCC 700264 / AMB-1</strain>
    </source>
</reference>
<dbReference type="EMBL" id="AP007255">
    <property type="protein sequence ID" value="BAE51939.1"/>
    <property type="molecule type" value="Genomic_DNA"/>
</dbReference>
<dbReference type="RefSeq" id="WP_008620996.1">
    <property type="nucleotide sequence ID" value="NC_007626.1"/>
</dbReference>
<dbReference type="SMR" id="Q2W2I6"/>
<dbReference type="STRING" id="342108.amb3135"/>
<dbReference type="KEGG" id="mag:amb3135"/>
<dbReference type="HOGENOM" id="CLU_104295_1_2_5"/>
<dbReference type="OrthoDB" id="9802366at2"/>
<dbReference type="Proteomes" id="UP000007058">
    <property type="component" value="Chromosome"/>
</dbReference>
<dbReference type="GO" id="GO:0015935">
    <property type="term" value="C:small ribosomal subunit"/>
    <property type="evidence" value="ECO:0007669"/>
    <property type="project" value="InterPro"/>
</dbReference>
<dbReference type="GO" id="GO:0019843">
    <property type="term" value="F:rRNA binding"/>
    <property type="evidence" value="ECO:0007669"/>
    <property type="project" value="UniProtKB-UniRule"/>
</dbReference>
<dbReference type="GO" id="GO:0003735">
    <property type="term" value="F:structural constituent of ribosome"/>
    <property type="evidence" value="ECO:0007669"/>
    <property type="project" value="InterPro"/>
</dbReference>
<dbReference type="GO" id="GO:0000049">
    <property type="term" value="F:tRNA binding"/>
    <property type="evidence" value="ECO:0007669"/>
    <property type="project" value="UniProtKB-UniRule"/>
</dbReference>
<dbReference type="GO" id="GO:0006412">
    <property type="term" value="P:translation"/>
    <property type="evidence" value="ECO:0007669"/>
    <property type="project" value="UniProtKB-UniRule"/>
</dbReference>
<dbReference type="CDD" id="cd03368">
    <property type="entry name" value="Ribosomal_S12"/>
    <property type="match status" value="1"/>
</dbReference>
<dbReference type="FunFam" id="2.40.50.140:FF:000001">
    <property type="entry name" value="30S ribosomal protein S12"/>
    <property type="match status" value="1"/>
</dbReference>
<dbReference type="Gene3D" id="2.40.50.140">
    <property type="entry name" value="Nucleic acid-binding proteins"/>
    <property type="match status" value="1"/>
</dbReference>
<dbReference type="HAMAP" id="MF_00403_B">
    <property type="entry name" value="Ribosomal_uS12_B"/>
    <property type="match status" value="1"/>
</dbReference>
<dbReference type="InterPro" id="IPR012340">
    <property type="entry name" value="NA-bd_OB-fold"/>
</dbReference>
<dbReference type="InterPro" id="IPR006032">
    <property type="entry name" value="Ribosomal_uS12"/>
</dbReference>
<dbReference type="InterPro" id="IPR005679">
    <property type="entry name" value="Ribosomal_uS12_bac"/>
</dbReference>
<dbReference type="NCBIfam" id="TIGR00981">
    <property type="entry name" value="rpsL_bact"/>
    <property type="match status" value="1"/>
</dbReference>
<dbReference type="PANTHER" id="PTHR11652">
    <property type="entry name" value="30S RIBOSOMAL PROTEIN S12 FAMILY MEMBER"/>
    <property type="match status" value="1"/>
</dbReference>
<dbReference type="Pfam" id="PF00164">
    <property type="entry name" value="Ribosom_S12_S23"/>
    <property type="match status" value="1"/>
</dbReference>
<dbReference type="PIRSF" id="PIRSF002133">
    <property type="entry name" value="Ribosomal_S12/S23"/>
    <property type="match status" value="1"/>
</dbReference>
<dbReference type="PRINTS" id="PR01034">
    <property type="entry name" value="RIBOSOMALS12"/>
</dbReference>
<dbReference type="SUPFAM" id="SSF50249">
    <property type="entry name" value="Nucleic acid-binding proteins"/>
    <property type="match status" value="1"/>
</dbReference>
<dbReference type="PROSITE" id="PS00055">
    <property type="entry name" value="RIBOSOMAL_S12"/>
    <property type="match status" value="1"/>
</dbReference>
<evidence type="ECO:0000250" key="1"/>
<evidence type="ECO:0000255" key="2">
    <source>
        <dbReference type="HAMAP-Rule" id="MF_00403"/>
    </source>
</evidence>
<evidence type="ECO:0000256" key="3">
    <source>
        <dbReference type="SAM" id="MobiDB-lite"/>
    </source>
</evidence>
<evidence type="ECO:0000305" key="4"/>